<geneLocation type="chloroplast"/>
<proteinExistence type="inferred from homology"/>
<comment type="function">
    <text evidence="1">DNA-dependent RNA polymerase catalyzes the transcription of DNA into RNA using the four ribonucleoside triphosphates as substrates.</text>
</comment>
<comment type="catalytic activity">
    <reaction evidence="1">
        <text>RNA(n) + a ribonucleoside 5'-triphosphate = RNA(n+1) + diphosphate</text>
        <dbReference type="Rhea" id="RHEA:21248"/>
        <dbReference type="Rhea" id="RHEA-COMP:14527"/>
        <dbReference type="Rhea" id="RHEA-COMP:17342"/>
        <dbReference type="ChEBI" id="CHEBI:33019"/>
        <dbReference type="ChEBI" id="CHEBI:61557"/>
        <dbReference type="ChEBI" id="CHEBI:140395"/>
        <dbReference type="EC" id="2.7.7.6"/>
    </reaction>
</comment>
<comment type="subunit">
    <text evidence="1">In plastids the minimal PEP RNA polymerase catalytic core is composed of four subunits: alpha, beta, beta', and beta''. When a (nuclear-encoded) sigma factor is associated with the core the holoenzyme is formed, which can initiate transcription.</text>
</comment>
<comment type="subcellular location">
    <subcellularLocation>
        <location>Plastid</location>
        <location>Chloroplast</location>
    </subcellularLocation>
</comment>
<comment type="similarity">
    <text evidence="1">Belongs to the RNA polymerase beta chain family.</text>
</comment>
<organism>
    <name type="scientific">Solanum bulbocastanum</name>
    <name type="common">Wild potato</name>
    <dbReference type="NCBI Taxonomy" id="147425"/>
    <lineage>
        <taxon>Eukaryota</taxon>
        <taxon>Viridiplantae</taxon>
        <taxon>Streptophyta</taxon>
        <taxon>Embryophyta</taxon>
        <taxon>Tracheophyta</taxon>
        <taxon>Spermatophyta</taxon>
        <taxon>Magnoliopsida</taxon>
        <taxon>eudicotyledons</taxon>
        <taxon>Gunneridae</taxon>
        <taxon>Pentapetalae</taxon>
        <taxon>asterids</taxon>
        <taxon>lamiids</taxon>
        <taxon>Solanales</taxon>
        <taxon>Solanaceae</taxon>
        <taxon>Solanoideae</taxon>
        <taxon>Solaneae</taxon>
        <taxon>Solanum</taxon>
    </lineage>
</organism>
<gene>
    <name evidence="1" type="primary">rpoB</name>
</gene>
<sequence>MLGDGNEGISTIPGFNQIQFEGFCRFIDQGLTEELYKFPKIEDTDQEIEFQLFVETYQLVEPLIKERDAVYESLTYSSELYVSAGLIWKNSRDMQEQTIFIGNIPLMNSLGTSIVNGIYRIVINQILQSPGIYYRSELDHNGISVYTGTIISDWGGRSELEIDRKARIWARVSRKQKISILVLSSAMGLNLREILENVCYPEIFLSFLNDKERKKIGSKENSILEFYQQFACVGGDPVFSESLCKELQKKFFQQRCELGRIGRRNMNRKLNLDIPQNNTFLLPRDILAAADHLIGLKFGMGALDDMNHLKNKRIRSVADLLQDQFGLALVRLENVVRGTICGAIRHKLIPTPQNLVTSPPLTTTYESFFGLHPLSQVLDRTNPLTQIVHGRKLSYLGPGGLTGRTASFRIRDIHPSHYGRICPIDTSEGINVGLIGSLSIHARIGHWGSLESPFYEISERSTGVRMLYLSPGSDEYYMVAAGNSLALNRDIQEEQVVPARYRQEFLTIAWEQVHLRSIFPFQYFSIGASLIPFIEHNDANRALMSSNMQRQAVPLSRSEKCIVGTGLERQAALDSGALAIAEREGRIVYTNTDKILLAGNGDILSIPLVIYQRSNKNTCMHQKLRVPRGKCIKKGQILADGAATVGGELALGKNVLVAYMPWEGYNSEDAVLISERLVYEDIYTSFHIRKYEIHTHVTSQGPEKVTNEIPHLEAHLLRNLDKKGIVMLGSWVETGDILVGKLTPQVVKESSYAPEDRLLRAILGIQVSTSKETCLKLPIGGRGRVIDVRWIQKRGGSSYNPETIRVYISQKREIKVGDKVAGRHGNKGIISKILPRQDMPYLQDGRSVDMVFNPLGVPSRMNVGQIFECSLGLAGSLLDRHYRIAPFDERYEQEASRKLVFSELYEASKQTANPWVFEPEYPGKSRIFDGRTGNPFEQPVIIGKPYILKLIHQVDDKIHGRSSGHYALVTQQPLRGRAKQGGQRVGEMEVWALEGFGVAHILQEMLTYKSDHIRARQEVLGTTIIGGTIPNPEDAPESFRLLVRELRSLALELNHFLVSEKNFQINRKEA</sequence>
<keyword id="KW-0150">Chloroplast</keyword>
<keyword id="KW-0240">DNA-directed RNA polymerase</keyword>
<keyword id="KW-0548">Nucleotidyltransferase</keyword>
<keyword id="KW-0934">Plastid</keyword>
<keyword id="KW-0804">Transcription</keyword>
<keyword id="KW-0808">Transferase</keyword>
<feature type="chain" id="PRO_0000237329" description="DNA-directed RNA polymerase subunit beta">
    <location>
        <begin position="1"/>
        <end position="1070"/>
    </location>
</feature>
<protein>
    <recommendedName>
        <fullName evidence="1">DNA-directed RNA polymerase subunit beta</fullName>
        <ecNumber evidence="1">2.7.7.6</ecNumber>
    </recommendedName>
    <alternativeName>
        <fullName evidence="1">PEP</fullName>
    </alternativeName>
    <alternativeName>
        <fullName evidence="1">Plastid-encoded RNA polymerase subunit beta</fullName>
        <shortName evidence="1">RNA polymerase subunit beta</shortName>
    </alternativeName>
</protein>
<reference key="1">
    <citation type="journal article" date="2006" name="Theor. Appl. Genet.">
        <title>Complete chloroplast genome sequences of Solanum bulbocastanum, Solanum lycopersicum and comparative analyses with other Solanaceae genomes.</title>
        <authorList>
            <person name="Daniell H."/>
            <person name="Lee S.-B."/>
            <person name="Grevich J."/>
            <person name="Saski C."/>
            <person name="Quesada-Vargas T."/>
            <person name="Guda C."/>
            <person name="Tomkins J."/>
            <person name="Jansen R.K."/>
        </authorList>
    </citation>
    <scope>NUCLEOTIDE SEQUENCE [LARGE SCALE GENOMIC DNA]</scope>
    <source>
        <strain>cv. PT29</strain>
    </source>
</reference>
<dbReference type="EC" id="2.7.7.6" evidence="1"/>
<dbReference type="EMBL" id="DQ347958">
    <property type="protein sequence ID" value="ABC56205.1"/>
    <property type="molecule type" value="Genomic_DNA"/>
</dbReference>
<dbReference type="RefSeq" id="YP_538840.1">
    <property type="nucleotide sequence ID" value="NC_007943.1"/>
</dbReference>
<dbReference type="SMR" id="Q2MIJ5"/>
<dbReference type="GeneID" id="3989543"/>
<dbReference type="GO" id="GO:0009507">
    <property type="term" value="C:chloroplast"/>
    <property type="evidence" value="ECO:0007669"/>
    <property type="project" value="UniProtKB-SubCell"/>
</dbReference>
<dbReference type="GO" id="GO:0000428">
    <property type="term" value="C:DNA-directed RNA polymerase complex"/>
    <property type="evidence" value="ECO:0007669"/>
    <property type="project" value="UniProtKB-KW"/>
</dbReference>
<dbReference type="GO" id="GO:0005739">
    <property type="term" value="C:mitochondrion"/>
    <property type="evidence" value="ECO:0007669"/>
    <property type="project" value="GOC"/>
</dbReference>
<dbReference type="GO" id="GO:0003677">
    <property type="term" value="F:DNA binding"/>
    <property type="evidence" value="ECO:0007669"/>
    <property type="project" value="UniProtKB-UniRule"/>
</dbReference>
<dbReference type="GO" id="GO:0003899">
    <property type="term" value="F:DNA-directed RNA polymerase activity"/>
    <property type="evidence" value="ECO:0007669"/>
    <property type="project" value="UniProtKB-UniRule"/>
</dbReference>
<dbReference type="GO" id="GO:0032549">
    <property type="term" value="F:ribonucleoside binding"/>
    <property type="evidence" value="ECO:0007669"/>
    <property type="project" value="InterPro"/>
</dbReference>
<dbReference type="GO" id="GO:0006351">
    <property type="term" value="P:DNA-templated transcription"/>
    <property type="evidence" value="ECO:0007669"/>
    <property type="project" value="UniProtKB-UniRule"/>
</dbReference>
<dbReference type="CDD" id="cd00653">
    <property type="entry name" value="RNA_pol_B_RPB2"/>
    <property type="match status" value="1"/>
</dbReference>
<dbReference type="FunFam" id="3.90.1110.10:FF:000009">
    <property type="entry name" value="DNA-directed RNA polymerase subunit beta"/>
    <property type="match status" value="1"/>
</dbReference>
<dbReference type="Gene3D" id="2.40.50.100">
    <property type="match status" value="1"/>
</dbReference>
<dbReference type="Gene3D" id="2.40.50.150">
    <property type="match status" value="1"/>
</dbReference>
<dbReference type="Gene3D" id="3.90.1100.10">
    <property type="match status" value="1"/>
</dbReference>
<dbReference type="Gene3D" id="2.30.150.10">
    <property type="entry name" value="DNA-directed RNA polymerase, beta subunit, external 1 domain"/>
    <property type="match status" value="1"/>
</dbReference>
<dbReference type="Gene3D" id="2.40.270.10">
    <property type="entry name" value="DNA-directed RNA polymerase, subunit 2, domain 6"/>
    <property type="match status" value="1"/>
</dbReference>
<dbReference type="Gene3D" id="3.90.1800.10">
    <property type="entry name" value="RNA polymerase alpha subunit dimerisation domain"/>
    <property type="match status" value="1"/>
</dbReference>
<dbReference type="Gene3D" id="3.90.1110.10">
    <property type="entry name" value="RNA polymerase Rpb2, domain 2"/>
    <property type="match status" value="1"/>
</dbReference>
<dbReference type="HAMAP" id="MF_01321">
    <property type="entry name" value="RNApol_bact_RpoB"/>
    <property type="match status" value="1"/>
</dbReference>
<dbReference type="InterPro" id="IPR042107">
    <property type="entry name" value="DNA-dir_RNA_pol_bsu_ext_1_sf"/>
</dbReference>
<dbReference type="InterPro" id="IPR015712">
    <property type="entry name" value="DNA-dir_RNA_pol_su2"/>
</dbReference>
<dbReference type="InterPro" id="IPR007120">
    <property type="entry name" value="DNA-dir_RNAP_su2_dom"/>
</dbReference>
<dbReference type="InterPro" id="IPR037033">
    <property type="entry name" value="DNA-dir_RNAP_su2_hyb_sf"/>
</dbReference>
<dbReference type="InterPro" id="IPR010243">
    <property type="entry name" value="RNA_pol_bsu_bac"/>
</dbReference>
<dbReference type="InterPro" id="IPR007121">
    <property type="entry name" value="RNA_pol_bsu_CS"/>
</dbReference>
<dbReference type="InterPro" id="IPR007642">
    <property type="entry name" value="RNA_pol_Rpb2_2"/>
</dbReference>
<dbReference type="InterPro" id="IPR037034">
    <property type="entry name" value="RNA_pol_Rpb2_2_sf"/>
</dbReference>
<dbReference type="InterPro" id="IPR007645">
    <property type="entry name" value="RNA_pol_Rpb2_3"/>
</dbReference>
<dbReference type="InterPro" id="IPR007641">
    <property type="entry name" value="RNA_pol_Rpb2_7"/>
</dbReference>
<dbReference type="InterPro" id="IPR014724">
    <property type="entry name" value="RNA_pol_RPB2_OB-fold"/>
</dbReference>
<dbReference type="NCBIfam" id="NF001616">
    <property type="entry name" value="PRK00405.1"/>
    <property type="match status" value="1"/>
</dbReference>
<dbReference type="PANTHER" id="PTHR20856">
    <property type="entry name" value="DNA-DIRECTED RNA POLYMERASE I SUBUNIT 2"/>
    <property type="match status" value="1"/>
</dbReference>
<dbReference type="Pfam" id="PF04561">
    <property type="entry name" value="RNA_pol_Rpb2_2"/>
    <property type="match status" value="1"/>
</dbReference>
<dbReference type="Pfam" id="PF04565">
    <property type="entry name" value="RNA_pol_Rpb2_3"/>
    <property type="match status" value="1"/>
</dbReference>
<dbReference type="Pfam" id="PF00562">
    <property type="entry name" value="RNA_pol_Rpb2_6"/>
    <property type="match status" value="1"/>
</dbReference>
<dbReference type="Pfam" id="PF04560">
    <property type="entry name" value="RNA_pol_Rpb2_7"/>
    <property type="match status" value="1"/>
</dbReference>
<dbReference type="SUPFAM" id="SSF64484">
    <property type="entry name" value="beta and beta-prime subunits of DNA dependent RNA-polymerase"/>
    <property type="match status" value="1"/>
</dbReference>
<dbReference type="PROSITE" id="PS01166">
    <property type="entry name" value="RNA_POL_BETA"/>
    <property type="match status" value="1"/>
</dbReference>
<name>RPOB_SOLBU</name>
<evidence type="ECO:0000255" key="1">
    <source>
        <dbReference type="HAMAP-Rule" id="MF_01321"/>
    </source>
</evidence>
<accession>Q2MIJ5</accession>